<dbReference type="EC" id="1.17.7.4" evidence="1"/>
<dbReference type="EMBL" id="CP001097">
    <property type="protein sequence ID" value="ACD89438.1"/>
    <property type="molecule type" value="Genomic_DNA"/>
</dbReference>
<dbReference type="RefSeq" id="WP_012465319.1">
    <property type="nucleotide sequence ID" value="NC_010803.1"/>
</dbReference>
<dbReference type="SMR" id="B3EFF5"/>
<dbReference type="STRING" id="290315.Clim_0345"/>
<dbReference type="KEGG" id="cli:Clim_0345"/>
<dbReference type="eggNOG" id="COG0761">
    <property type="taxonomic scope" value="Bacteria"/>
</dbReference>
<dbReference type="HOGENOM" id="CLU_027486_0_1_10"/>
<dbReference type="OrthoDB" id="9777362at2"/>
<dbReference type="UniPathway" id="UPA00056">
    <property type="reaction ID" value="UER00097"/>
</dbReference>
<dbReference type="UniPathway" id="UPA00059">
    <property type="reaction ID" value="UER00105"/>
</dbReference>
<dbReference type="Proteomes" id="UP000008841">
    <property type="component" value="Chromosome"/>
</dbReference>
<dbReference type="GO" id="GO:0051539">
    <property type="term" value="F:4 iron, 4 sulfur cluster binding"/>
    <property type="evidence" value="ECO:0007669"/>
    <property type="project" value="UniProtKB-UniRule"/>
</dbReference>
<dbReference type="GO" id="GO:0051745">
    <property type="term" value="F:4-hydroxy-3-methylbut-2-enyl diphosphate reductase activity"/>
    <property type="evidence" value="ECO:0007669"/>
    <property type="project" value="UniProtKB-UniRule"/>
</dbReference>
<dbReference type="GO" id="GO:0046872">
    <property type="term" value="F:metal ion binding"/>
    <property type="evidence" value="ECO:0007669"/>
    <property type="project" value="UniProtKB-KW"/>
</dbReference>
<dbReference type="GO" id="GO:0050992">
    <property type="term" value="P:dimethylallyl diphosphate biosynthetic process"/>
    <property type="evidence" value="ECO:0007669"/>
    <property type="project" value="UniProtKB-UniRule"/>
</dbReference>
<dbReference type="GO" id="GO:0019288">
    <property type="term" value="P:isopentenyl diphosphate biosynthetic process, methylerythritol 4-phosphate pathway"/>
    <property type="evidence" value="ECO:0007669"/>
    <property type="project" value="UniProtKB-UniRule"/>
</dbReference>
<dbReference type="GO" id="GO:0016114">
    <property type="term" value="P:terpenoid biosynthetic process"/>
    <property type="evidence" value="ECO:0007669"/>
    <property type="project" value="UniProtKB-UniRule"/>
</dbReference>
<dbReference type="CDD" id="cd13944">
    <property type="entry name" value="lytB_ispH"/>
    <property type="match status" value="1"/>
</dbReference>
<dbReference type="Gene3D" id="3.40.50.11270">
    <property type="match status" value="1"/>
</dbReference>
<dbReference type="Gene3D" id="3.40.1010.20">
    <property type="entry name" value="4-hydroxy-3-methylbut-2-enyl diphosphate reductase, catalytic domain"/>
    <property type="match status" value="2"/>
</dbReference>
<dbReference type="HAMAP" id="MF_00191">
    <property type="entry name" value="IspH"/>
    <property type="match status" value="1"/>
</dbReference>
<dbReference type="InterPro" id="IPR003451">
    <property type="entry name" value="LytB/IspH"/>
</dbReference>
<dbReference type="NCBIfam" id="TIGR00216">
    <property type="entry name" value="ispH_lytB"/>
    <property type="match status" value="1"/>
</dbReference>
<dbReference type="NCBIfam" id="NF002187">
    <property type="entry name" value="PRK01045.1-1"/>
    <property type="match status" value="1"/>
</dbReference>
<dbReference type="PANTHER" id="PTHR30426">
    <property type="entry name" value="4-HYDROXY-3-METHYLBUT-2-ENYL DIPHOSPHATE REDUCTASE"/>
    <property type="match status" value="1"/>
</dbReference>
<dbReference type="PANTHER" id="PTHR30426:SF0">
    <property type="entry name" value="4-HYDROXY-3-METHYLBUT-2-ENYL DIPHOSPHATE REDUCTASE"/>
    <property type="match status" value="1"/>
</dbReference>
<dbReference type="Pfam" id="PF02401">
    <property type="entry name" value="LYTB"/>
    <property type="match status" value="1"/>
</dbReference>
<gene>
    <name evidence="1" type="primary">ispH</name>
    <name type="ordered locus">Clim_0345</name>
</gene>
<comment type="function">
    <text evidence="1">Catalyzes the conversion of 1-hydroxy-2-methyl-2-(E)-butenyl 4-diphosphate (HMBPP) into a mixture of isopentenyl diphosphate (IPP) and dimethylallyl diphosphate (DMAPP). Acts in the terminal step of the DOXP/MEP pathway for isoprenoid precursor biosynthesis.</text>
</comment>
<comment type="catalytic activity">
    <reaction evidence="1">
        <text>isopentenyl diphosphate + 2 oxidized [2Fe-2S]-[ferredoxin] + H2O = (2E)-4-hydroxy-3-methylbut-2-enyl diphosphate + 2 reduced [2Fe-2S]-[ferredoxin] + 2 H(+)</text>
        <dbReference type="Rhea" id="RHEA:24488"/>
        <dbReference type="Rhea" id="RHEA-COMP:10000"/>
        <dbReference type="Rhea" id="RHEA-COMP:10001"/>
        <dbReference type="ChEBI" id="CHEBI:15377"/>
        <dbReference type="ChEBI" id="CHEBI:15378"/>
        <dbReference type="ChEBI" id="CHEBI:33737"/>
        <dbReference type="ChEBI" id="CHEBI:33738"/>
        <dbReference type="ChEBI" id="CHEBI:128753"/>
        <dbReference type="ChEBI" id="CHEBI:128769"/>
        <dbReference type="EC" id="1.17.7.4"/>
    </reaction>
</comment>
<comment type="catalytic activity">
    <reaction evidence="1">
        <text>dimethylallyl diphosphate + 2 oxidized [2Fe-2S]-[ferredoxin] + H2O = (2E)-4-hydroxy-3-methylbut-2-enyl diphosphate + 2 reduced [2Fe-2S]-[ferredoxin] + 2 H(+)</text>
        <dbReference type="Rhea" id="RHEA:24825"/>
        <dbReference type="Rhea" id="RHEA-COMP:10000"/>
        <dbReference type="Rhea" id="RHEA-COMP:10001"/>
        <dbReference type="ChEBI" id="CHEBI:15377"/>
        <dbReference type="ChEBI" id="CHEBI:15378"/>
        <dbReference type="ChEBI" id="CHEBI:33737"/>
        <dbReference type="ChEBI" id="CHEBI:33738"/>
        <dbReference type="ChEBI" id="CHEBI:57623"/>
        <dbReference type="ChEBI" id="CHEBI:128753"/>
        <dbReference type="EC" id="1.17.7.4"/>
    </reaction>
</comment>
<comment type="cofactor">
    <cofactor evidence="1">
        <name>[4Fe-4S] cluster</name>
        <dbReference type="ChEBI" id="CHEBI:49883"/>
    </cofactor>
    <text evidence="1">Binds 1 [4Fe-4S] cluster per subunit.</text>
</comment>
<comment type="pathway">
    <text evidence="1">Isoprenoid biosynthesis; dimethylallyl diphosphate biosynthesis; dimethylallyl diphosphate from (2E)-4-hydroxy-3-methylbutenyl diphosphate: step 1/1.</text>
</comment>
<comment type="pathway">
    <text evidence="1">Isoprenoid biosynthesis; isopentenyl diphosphate biosynthesis via DXP pathway; isopentenyl diphosphate from 1-deoxy-D-xylulose 5-phosphate: step 6/6.</text>
</comment>
<comment type="similarity">
    <text evidence="1">Belongs to the IspH family.</text>
</comment>
<name>ISPH_CHLL2</name>
<organism>
    <name type="scientific">Chlorobium limicola (strain DSM 245 / NBRC 103803 / 6330)</name>
    <dbReference type="NCBI Taxonomy" id="290315"/>
    <lineage>
        <taxon>Bacteria</taxon>
        <taxon>Pseudomonadati</taxon>
        <taxon>Chlorobiota</taxon>
        <taxon>Chlorobiia</taxon>
        <taxon>Chlorobiales</taxon>
        <taxon>Chlorobiaceae</taxon>
        <taxon>Chlorobium/Pelodictyon group</taxon>
        <taxon>Chlorobium</taxon>
    </lineage>
</organism>
<proteinExistence type="inferred from homology"/>
<feature type="chain" id="PRO_1000098936" description="4-hydroxy-3-methylbut-2-enyl diphosphate reductase">
    <location>
        <begin position="1"/>
        <end position="324"/>
    </location>
</feature>
<feature type="active site" description="Proton donor" evidence="1">
    <location>
        <position position="127"/>
    </location>
</feature>
<feature type="binding site" evidence="1">
    <location>
        <position position="13"/>
    </location>
    <ligand>
        <name>[4Fe-4S] cluster</name>
        <dbReference type="ChEBI" id="CHEBI:49883"/>
    </ligand>
</feature>
<feature type="binding site" evidence="1">
    <location>
        <position position="41"/>
    </location>
    <ligand>
        <name>(2E)-4-hydroxy-3-methylbut-2-enyl diphosphate</name>
        <dbReference type="ChEBI" id="CHEBI:128753"/>
    </ligand>
</feature>
<feature type="binding site" evidence="1">
    <location>
        <position position="41"/>
    </location>
    <ligand>
        <name>dimethylallyl diphosphate</name>
        <dbReference type="ChEBI" id="CHEBI:57623"/>
    </ligand>
</feature>
<feature type="binding site" evidence="1">
    <location>
        <position position="41"/>
    </location>
    <ligand>
        <name>isopentenyl diphosphate</name>
        <dbReference type="ChEBI" id="CHEBI:128769"/>
    </ligand>
</feature>
<feature type="binding site" evidence="1">
    <location>
        <position position="75"/>
    </location>
    <ligand>
        <name>(2E)-4-hydroxy-3-methylbut-2-enyl diphosphate</name>
        <dbReference type="ChEBI" id="CHEBI:128753"/>
    </ligand>
</feature>
<feature type="binding site" evidence="1">
    <location>
        <position position="75"/>
    </location>
    <ligand>
        <name>dimethylallyl diphosphate</name>
        <dbReference type="ChEBI" id="CHEBI:57623"/>
    </ligand>
</feature>
<feature type="binding site" evidence="1">
    <location>
        <position position="75"/>
    </location>
    <ligand>
        <name>isopentenyl diphosphate</name>
        <dbReference type="ChEBI" id="CHEBI:128769"/>
    </ligand>
</feature>
<feature type="binding site" evidence="1">
    <location>
        <position position="97"/>
    </location>
    <ligand>
        <name>[4Fe-4S] cluster</name>
        <dbReference type="ChEBI" id="CHEBI:49883"/>
    </ligand>
</feature>
<feature type="binding site" evidence="1">
    <location>
        <position position="125"/>
    </location>
    <ligand>
        <name>(2E)-4-hydroxy-3-methylbut-2-enyl diphosphate</name>
        <dbReference type="ChEBI" id="CHEBI:128753"/>
    </ligand>
</feature>
<feature type="binding site" evidence="1">
    <location>
        <position position="125"/>
    </location>
    <ligand>
        <name>dimethylallyl diphosphate</name>
        <dbReference type="ChEBI" id="CHEBI:57623"/>
    </ligand>
</feature>
<feature type="binding site" evidence="1">
    <location>
        <position position="125"/>
    </location>
    <ligand>
        <name>isopentenyl diphosphate</name>
        <dbReference type="ChEBI" id="CHEBI:128769"/>
    </ligand>
</feature>
<feature type="binding site" evidence="1">
    <location>
        <position position="168"/>
    </location>
    <ligand>
        <name>(2E)-4-hydroxy-3-methylbut-2-enyl diphosphate</name>
        <dbReference type="ChEBI" id="CHEBI:128753"/>
    </ligand>
</feature>
<feature type="binding site" evidence="1">
    <location>
        <position position="225"/>
    </location>
    <ligand>
        <name>[4Fe-4S] cluster</name>
        <dbReference type="ChEBI" id="CHEBI:49883"/>
    </ligand>
</feature>
<feature type="binding site" evidence="1">
    <location>
        <position position="253"/>
    </location>
    <ligand>
        <name>(2E)-4-hydroxy-3-methylbut-2-enyl diphosphate</name>
        <dbReference type="ChEBI" id="CHEBI:128753"/>
    </ligand>
</feature>
<feature type="binding site" evidence="1">
    <location>
        <position position="253"/>
    </location>
    <ligand>
        <name>dimethylallyl diphosphate</name>
        <dbReference type="ChEBI" id="CHEBI:57623"/>
    </ligand>
</feature>
<feature type="binding site" evidence="1">
    <location>
        <position position="253"/>
    </location>
    <ligand>
        <name>isopentenyl diphosphate</name>
        <dbReference type="ChEBI" id="CHEBI:128769"/>
    </ligand>
</feature>
<feature type="binding site" evidence="1">
    <location>
        <position position="254"/>
    </location>
    <ligand>
        <name>(2E)-4-hydroxy-3-methylbut-2-enyl diphosphate</name>
        <dbReference type="ChEBI" id="CHEBI:128753"/>
    </ligand>
</feature>
<feature type="binding site" evidence="1">
    <location>
        <position position="254"/>
    </location>
    <ligand>
        <name>dimethylallyl diphosphate</name>
        <dbReference type="ChEBI" id="CHEBI:57623"/>
    </ligand>
</feature>
<feature type="binding site" evidence="1">
    <location>
        <position position="254"/>
    </location>
    <ligand>
        <name>isopentenyl diphosphate</name>
        <dbReference type="ChEBI" id="CHEBI:128769"/>
    </ligand>
</feature>
<feature type="binding site" evidence="1">
    <location>
        <position position="255"/>
    </location>
    <ligand>
        <name>(2E)-4-hydroxy-3-methylbut-2-enyl diphosphate</name>
        <dbReference type="ChEBI" id="CHEBI:128753"/>
    </ligand>
</feature>
<feature type="binding site" evidence="1">
    <location>
        <position position="255"/>
    </location>
    <ligand>
        <name>dimethylallyl diphosphate</name>
        <dbReference type="ChEBI" id="CHEBI:57623"/>
    </ligand>
</feature>
<feature type="binding site" evidence="1">
    <location>
        <position position="255"/>
    </location>
    <ligand>
        <name>isopentenyl diphosphate</name>
        <dbReference type="ChEBI" id="CHEBI:128769"/>
    </ligand>
</feature>
<feature type="binding site" evidence="1">
    <location>
        <position position="302"/>
    </location>
    <ligand>
        <name>(2E)-4-hydroxy-3-methylbut-2-enyl diphosphate</name>
        <dbReference type="ChEBI" id="CHEBI:128753"/>
    </ligand>
</feature>
<feature type="binding site" evidence="1">
    <location>
        <position position="302"/>
    </location>
    <ligand>
        <name>dimethylallyl diphosphate</name>
        <dbReference type="ChEBI" id="CHEBI:57623"/>
    </ligand>
</feature>
<feature type="binding site" evidence="1">
    <location>
        <position position="302"/>
    </location>
    <ligand>
        <name>isopentenyl diphosphate</name>
        <dbReference type="ChEBI" id="CHEBI:128769"/>
    </ligand>
</feature>
<reference key="1">
    <citation type="submission" date="2008-05" db="EMBL/GenBank/DDBJ databases">
        <title>Complete sequence of Chlorobium limicola DSM 245.</title>
        <authorList>
            <consortium name="US DOE Joint Genome Institute"/>
            <person name="Lucas S."/>
            <person name="Copeland A."/>
            <person name="Lapidus A."/>
            <person name="Glavina del Rio T."/>
            <person name="Dalin E."/>
            <person name="Tice H."/>
            <person name="Bruce D."/>
            <person name="Goodwin L."/>
            <person name="Pitluck S."/>
            <person name="Schmutz J."/>
            <person name="Larimer F."/>
            <person name="Land M."/>
            <person name="Hauser L."/>
            <person name="Kyrpides N."/>
            <person name="Ovchinnikova G."/>
            <person name="Zhao F."/>
            <person name="Li T."/>
            <person name="Liu Z."/>
            <person name="Overmann J."/>
            <person name="Bryant D.A."/>
            <person name="Richardson P."/>
        </authorList>
    </citation>
    <scope>NUCLEOTIDE SEQUENCE [LARGE SCALE GENOMIC DNA]</scope>
    <source>
        <strain>DSM 245 / NBRC 103803 / 6330</strain>
    </source>
</reference>
<accession>B3EFF5</accession>
<keyword id="KW-0004">4Fe-4S</keyword>
<keyword id="KW-0408">Iron</keyword>
<keyword id="KW-0411">Iron-sulfur</keyword>
<keyword id="KW-0414">Isoprene biosynthesis</keyword>
<keyword id="KW-0479">Metal-binding</keyword>
<keyword id="KW-0560">Oxidoreductase</keyword>
<sequence length="324" mass="35961">MKINLDRTSSGFCIGVQGTIHVAEEKLAAKETLFSLGDVVHNEVEVKRLENLGLTTIDEAVFKELQNTSVLIRAHGEPPETYATAERNKLDITDTTCPVVSKLQRTARLLCQLGYQVIIYGKHTHPEVIGINGHCSNRAVIIKHADLSDPEELKTLDTTIKTALISQTTMDVPGFYELKTNLEKRFAESDETAGKPWTAIRDIDITAAMTGIGTMPRTVFKDTICRQVSSRNKKLHDFALANSCVIFVAGRKSSNGQVLFGICRSANPRSYFIEDIEDLEDSWFRDNEGSPVESIGICGATSTPMWLLEKVAEFIDGRFNHRDA</sequence>
<evidence type="ECO:0000255" key="1">
    <source>
        <dbReference type="HAMAP-Rule" id="MF_00191"/>
    </source>
</evidence>
<protein>
    <recommendedName>
        <fullName evidence="1">4-hydroxy-3-methylbut-2-enyl diphosphate reductase</fullName>
        <shortName evidence="1">HMBPP reductase</shortName>
        <ecNumber evidence="1">1.17.7.4</ecNumber>
    </recommendedName>
</protein>